<evidence type="ECO:0000255" key="1"/>
<evidence type="ECO:0000255" key="2">
    <source>
        <dbReference type="PROSITE-ProRule" id="PRU00434"/>
    </source>
</evidence>
<evidence type="ECO:0000255" key="3">
    <source>
        <dbReference type="PROSITE-ProRule" id="PRU00441"/>
    </source>
</evidence>
<evidence type="ECO:0000256" key="4">
    <source>
        <dbReference type="SAM" id="MobiDB-lite"/>
    </source>
</evidence>
<evidence type="ECO:0000269" key="5">
    <source>
    </source>
</evidence>
<evidence type="ECO:0000305" key="6"/>
<organism>
    <name type="scientific">Drosophila melanogaster</name>
    <name type="common">Fruit fly</name>
    <dbReference type="NCBI Taxonomy" id="7227"/>
    <lineage>
        <taxon>Eukaryota</taxon>
        <taxon>Metazoa</taxon>
        <taxon>Ecdysozoa</taxon>
        <taxon>Arthropoda</taxon>
        <taxon>Hexapoda</taxon>
        <taxon>Insecta</taxon>
        <taxon>Pterygota</taxon>
        <taxon>Neoptera</taxon>
        <taxon>Endopterygota</taxon>
        <taxon>Diptera</taxon>
        <taxon>Brachycera</taxon>
        <taxon>Muscomorpha</taxon>
        <taxon>Ephydroidea</taxon>
        <taxon>Drosophilidae</taxon>
        <taxon>Drosophila</taxon>
        <taxon>Sophophora</taxon>
    </lineage>
</organism>
<feature type="chain" id="PRO_0000093348" description="Multidrug resistance protein homolog 65">
    <location>
        <begin position="1"/>
        <end position="1302"/>
    </location>
</feature>
<feature type="topological domain" description="Cytoplasmic" evidence="1">
    <location>
        <begin position="1"/>
        <end position="48"/>
    </location>
</feature>
<feature type="transmembrane region" description="Helical; Name=1" evidence="3">
    <location>
        <begin position="49"/>
        <end position="69"/>
    </location>
</feature>
<feature type="topological domain" description="Extracellular" evidence="1">
    <location>
        <begin position="70"/>
        <end position="118"/>
    </location>
</feature>
<feature type="transmembrane region" description="Helical; Name=2" evidence="3">
    <location>
        <begin position="119"/>
        <end position="147"/>
    </location>
</feature>
<feature type="topological domain" description="Cytoplasmic" evidence="1">
    <location>
        <begin position="148"/>
        <end position="194"/>
    </location>
</feature>
<feature type="transmembrane region" description="Helical; Name=3" evidence="3">
    <location>
        <begin position="195"/>
        <end position="215"/>
    </location>
</feature>
<feature type="topological domain" description="Extracellular" evidence="1">
    <location>
        <begin position="216"/>
        <end position="223"/>
    </location>
</feature>
<feature type="transmembrane region" description="Helical; Name=4" evidence="3">
    <location>
        <begin position="224"/>
        <end position="242"/>
    </location>
</feature>
<feature type="topological domain" description="Cytoplasmic" evidence="1">
    <location>
        <begin position="243"/>
        <end position="302"/>
    </location>
</feature>
<feature type="transmembrane region" description="Helical; Name=5" evidence="3">
    <location>
        <begin position="303"/>
        <end position="323"/>
    </location>
</feature>
<feature type="topological domain" description="Extracellular" evidence="1">
    <location>
        <begin position="324"/>
        <end position="341"/>
    </location>
</feature>
<feature type="transmembrane region" description="Helical; Name=6" evidence="3">
    <location>
        <begin position="342"/>
        <end position="362"/>
    </location>
</feature>
<feature type="topological domain" description="Cytoplasmic" evidence="1">
    <location>
        <begin position="363"/>
        <end position="731"/>
    </location>
</feature>
<feature type="transmembrane region" description="Helical; Name=7" evidence="3">
    <location>
        <begin position="732"/>
        <end position="753"/>
    </location>
</feature>
<feature type="topological domain" description="Extracellular" evidence="1">
    <location>
        <begin position="754"/>
        <end position="776"/>
    </location>
</feature>
<feature type="transmembrane region" description="Helical; Name=8" evidence="3">
    <location>
        <begin position="777"/>
        <end position="798"/>
    </location>
</feature>
<feature type="topological domain" description="Cytoplasmic" evidence="1">
    <location>
        <begin position="799"/>
        <end position="852"/>
    </location>
</feature>
<feature type="transmembrane region" description="Helical; Name=9" evidence="3">
    <location>
        <begin position="853"/>
        <end position="873"/>
    </location>
</feature>
<feature type="topological domain" description="Extracellular" evidence="1">
    <location>
        <position position="874"/>
    </location>
</feature>
<feature type="transmembrane region" description="Helical; Name=10" evidence="3">
    <location>
        <begin position="875"/>
        <end position="894"/>
    </location>
</feature>
<feature type="topological domain" description="Cytoplasmic" evidence="1">
    <location>
        <begin position="895"/>
        <end position="956"/>
    </location>
</feature>
<feature type="transmembrane region" description="Helical; Name=11" evidence="3">
    <location>
        <begin position="957"/>
        <end position="977"/>
    </location>
</feature>
<feature type="topological domain" description="Extracellular" evidence="1">
    <location>
        <begin position="978"/>
        <end position="993"/>
    </location>
</feature>
<feature type="transmembrane region" description="Helical; Name=12" evidence="3">
    <location>
        <begin position="994"/>
        <end position="1014"/>
    </location>
</feature>
<feature type="topological domain" description="Cytoplasmic" evidence="1">
    <location>
        <begin position="1015"/>
        <end position="1302"/>
    </location>
</feature>
<feature type="domain" description="ABC transmembrane type-1 1" evidence="3">
    <location>
        <begin position="48"/>
        <end position="369"/>
    </location>
</feature>
<feature type="domain" description="ABC transporter 1" evidence="2">
    <location>
        <begin position="405"/>
        <end position="641"/>
    </location>
</feature>
<feature type="domain" description="ABC transmembrane type-1 2" evidence="3">
    <location>
        <begin position="732"/>
        <end position="1020"/>
    </location>
</feature>
<feature type="domain" description="ABC transporter 2" evidence="2">
    <location>
        <begin position="1059"/>
        <end position="1298"/>
    </location>
</feature>
<feature type="region of interest" description="Disordered" evidence="4">
    <location>
        <begin position="1"/>
        <end position="23"/>
    </location>
</feature>
<feature type="binding site" evidence="2">
    <location>
        <begin position="440"/>
        <end position="447"/>
    </location>
    <ligand>
        <name>ATP</name>
        <dbReference type="ChEBI" id="CHEBI:30616"/>
        <label>1</label>
    </ligand>
</feature>
<feature type="binding site" evidence="2">
    <location>
        <begin position="1094"/>
        <end position="1101"/>
    </location>
    <ligand>
        <name>ATP</name>
        <dbReference type="ChEBI" id="CHEBI:30616"/>
        <label>2</label>
    </ligand>
</feature>
<feature type="glycosylation site" description="N-linked (GlcNAc...) asparagine" evidence="5">
    <location>
        <position position="103"/>
    </location>
</feature>
<feature type="sequence conflict" description="In Ref. 1; AAA28680." evidence="6" ref="1">
    <original>T</original>
    <variation>S</variation>
    <location>
        <position position="369"/>
    </location>
</feature>
<feature type="sequence conflict" description="In Ref. 1; AAA28680." evidence="6" ref="1">
    <original>F</original>
    <variation>L</variation>
    <location>
        <position position="678"/>
    </location>
</feature>
<accession>Q00748</accession>
<accession>Q9VRW3</accession>
<keyword id="KW-0067">ATP-binding</keyword>
<keyword id="KW-0325">Glycoprotein</keyword>
<keyword id="KW-0472">Membrane</keyword>
<keyword id="KW-0547">Nucleotide-binding</keyword>
<keyword id="KW-1185">Reference proteome</keyword>
<keyword id="KW-0677">Repeat</keyword>
<keyword id="KW-1278">Translocase</keyword>
<keyword id="KW-0812">Transmembrane</keyword>
<keyword id="KW-1133">Transmembrane helix</keyword>
<keyword id="KW-0813">Transport</keyword>
<sequence>MERDEVSTSSSEGKSQEEAPMAEGLEPTEPIAFLKLFRFSTYGEIGWLFFGFIMCCIKALTLPAVVIIYSEFTSMLVDRAMQFGTSSNVHALPLFGGGKTLTNASREENNEALYDDSISYGILLTIASVVMFISGIFSVDVFNMVALRQVTRMRIKLFSSVIRQDIGWHDLASKQNFTQSMVDDVEKIRDGISEKVGHFVYLVVGFIITVAISFSYGWKLTLAVSSYIPLVILLNYYVAKFQGKLTAREQESYAGAGNLAEEILSSIRTVVSFGGEKSEVQRYENFLVPARKASQWKGAFSGLSDAVLKSMLYLSCAGAFWYGVNLIIDDRNVENKEYTPAILMIAFFGIIVGADNIARTAPFLESFATARGCATNLFKVIDLTSKIDPLSTDGKLLNYGLRGDVEFQDVFFRYPSRPEVIVHRGLNIRIRAGQTVALVGSSGCGKSTCVQLLQRFYDPVFGSVLLDDLDIRKYNIQWLRSNIAVVGQEPVLFLGTIAQNISYGKPGATQKEIEAAATQAGAHEFITNLPESYRSMIGERGSQLSGGQKQRIAIARALIQNPKILLLDEATSALDYQSEKQVQQALDLASKGRTTIVVSHRLSAIRGADKIVFIHDGKVLEEGSHDDLMALEGAYYNMVRAGDINMPDEVEKEDSIEDTKQKSLALFEKSFETSPLNFEKGQKNSVQFEEPIIKALIKDTNAQSAEAPPEKPNFFRTFSRILQLAKQEWCYLILGTISAVAVGFLYPAFAVIFGEFYAALAEKDPEDALRRTAVLSWACLGLAFLTGLVCFLQTYLFNYAGIWLTTRMRAMTFNAMVNQEVGWFDDENNSVGALSARLSGEAVDIQGAIGYPLSGMIQALSNFISSVSVAMYYNWKLALLCLANCPIIVGSVILEAKMMSNAVVREKQVIEEACRIATESITNIRTVAGLRREADVIREYTEEIQRVEVLIRQKLRWRGVLNSTMQASAFFAYAVALCYGGVLVSEGQLPFQDIIKVSETLLYGSMMLAQSLAFTPAFSAALIAGHRLFQILDRKPKIQSPMGTIKNTLAKQLNLFEGVRYRGIQFRYPTRPDAKILNGLDLEVLKGQTVALVGHSGCGKSTCVQLLQRYYDPDEGTIHIDHDDIQHDLTLDGVRTKLGIVSQEPTLFERSIAENIAYGDNRRSVSMVEIIAAAKSANAHSFIISLPNGYDTRMGARGTQLSGGQKQRIAIARALVRNPKILLLDEATSALDLQSEQLVQQALDTACSGRTCIVIAHRLSTVQNADVICVIQNGQVVEQGNHMQLISQGGIYAKLHKTQKDH</sequence>
<comment type="catalytic activity">
    <reaction>
        <text>ATP + H2O + xenobioticSide 1 = ADP + phosphate + xenobioticSide 2.</text>
        <dbReference type="EC" id="7.6.2.2"/>
    </reaction>
</comment>
<comment type="subcellular location">
    <subcellularLocation>
        <location>Membrane</location>
        <topology>Multi-pass membrane protein</topology>
    </subcellularLocation>
</comment>
<comment type="similarity">
    <text evidence="6">Belongs to the ABC transporter superfamily. ABCB family. Multidrug resistance exporter (TC 3.A.1.201) subfamily.</text>
</comment>
<name>MDR65_DROME</name>
<dbReference type="EC" id="7.6.2.2"/>
<dbReference type="EMBL" id="M59077">
    <property type="protein sequence ID" value="AAA28680.1"/>
    <property type="molecule type" value="mRNA"/>
</dbReference>
<dbReference type="EMBL" id="AF251287">
    <property type="protein sequence ID" value="AAF69147.1"/>
    <property type="molecule type" value="Genomic_DNA"/>
</dbReference>
<dbReference type="EMBL" id="AF251286">
    <property type="protein sequence ID" value="AAF69146.1"/>
    <property type="molecule type" value="Genomic_DNA"/>
</dbReference>
<dbReference type="EMBL" id="AE014296">
    <property type="protein sequence ID" value="AAF50669.1"/>
    <property type="molecule type" value="Genomic_DNA"/>
</dbReference>
<dbReference type="PIR" id="B41249">
    <property type="entry name" value="B41249"/>
</dbReference>
<dbReference type="RefSeq" id="NP_476831.1">
    <property type="nucleotide sequence ID" value="NM_057483.4"/>
</dbReference>
<dbReference type="SMR" id="Q00748"/>
<dbReference type="BioGRID" id="64179">
    <property type="interactions" value="11"/>
</dbReference>
<dbReference type="DIP" id="DIP-17575N"/>
<dbReference type="FunCoup" id="Q00748">
    <property type="interactions" value="42"/>
</dbReference>
<dbReference type="IntAct" id="Q00748">
    <property type="interactions" value="2"/>
</dbReference>
<dbReference type="STRING" id="7227.FBpp0076719"/>
<dbReference type="TCDB" id="3.A.1.201.31">
    <property type="family name" value="the atp-binding cassette (abc) superfamily"/>
</dbReference>
<dbReference type="GlyCosmos" id="Q00748">
    <property type="glycosylation" value="1 site, No reported glycans"/>
</dbReference>
<dbReference type="GlyGen" id="Q00748">
    <property type="glycosylation" value="1 site"/>
</dbReference>
<dbReference type="iPTMnet" id="Q00748"/>
<dbReference type="PaxDb" id="7227-FBpp0076719"/>
<dbReference type="EnsemblMetazoa" id="FBtr0077011">
    <property type="protein sequence ID" value="FBpp0076719"/>
    <property type="gene ID" value="FBgn0004513"/>
</dbReference>
<dbReference type="GeneID" id="38726"/>
<dbReference type="KEGG" id="dme:Dmel_CG10181"/>
<dbReference type="AGR" id="FB:FBgn0004513"/>
<dbReference type="CTD" id="38726"/>
<dbReference type="FlyBase" id="FBgn0004513">
    <property type="gene designation" value="Mdr65"/>
</dbReference>
<dbReference type="VEuPathDB" id="VectorBase:FBgn0004513"/>
<dbReference type="eggNOG" id="KOG0055">
    <property type="taxonomic scope" value="Eukaryota"/>
</dbReference>
<dbReference type="HOGENOM" id="CLU_000604_17_2_1"/>
<dbReference type="InParanoid" id="Q00748"/>
<dbReference type="OMA" id="LTMEDTI"/>
<dbReference type="OrthoDB" id="6500128at2759"/>
<dbReference type="PhylomeDB" id="Q00748"/>
<dbReference type="BioGRID-ORCS" id="38726">
    <property type="hits" value="0 hits in 3 CRISPR screens"/>
</dbReference>
<dbReference type="GenomeRNAi" id="38726"/>
<dbReference type="PRO" id="PR:Q00748"/>
<dbReference type="Proteomes" id="UP000000803">
    <property type="component" value="Chromosome 3L"/>
</dbReference>
<dbReference type="Bgee" id="FBgn0004513">
    <property type="expression patterns" value="Expressed in subperineurial glial cell (Drosophila) in insect head and 36 other cell types or tissues"/>
</dbReference>
<dbReference type="ExpressionAtlas" id="Q00748">
    <property type="expression patterns" value="baseline and differential"/>
</dbReference>
<dbReference type="GO" id="GO:0043190">
    <property type="term" value="C:ATP-binding cassette (ABC) transporter complex"/>
    <property type="evidence" value="ECO:0000314"/>
    <property type="project" value="FlyBase"/>
</dbReference>
<dbReference type="GO" id="GO:0016020">
    <property type="term" value="C:membrane"/>
    <property type="evidence" value="ECO:0000318"/>
    <property type="project" value="GO_Central"/>
</dbReference>
<dbReference type="GO" id="GO:0005919">
    <property type="term" value="C:pleated septate junction"/>
    <property type="evidence" value="ECO:0000314"/>
    <property type="project" value="FlyBase"/>
</dbReference>
<dbReference type="GO" id="GO:0008559">
    <property type="term" value="F:ABC-type xenobiotic transporter activity"/>
    <property type="evidence" value="ECO:0000314"/>
    <property type="project" value="FlyBase"/>
</dbReference>
<dbReference type="GO" id="GO:0005524">
    <property type="term" value="F:ATP binding"/>
    <property type="evidence" value="ECO:0007669"/>
    <property type="project" value="UniProtKB-KW"/>
</dbReference>
<dbReference type="GO" id="GO:0016887">
    <property type="term" value="F:ATP hydrolysis activity"/>
    <property type="evidence" value="ECO:0007669"/>
    <property type="project" value="InterPro"/>
</dbReference>
<dbReference type="GO" id="GO:0042626">
    <property type="term" value="F:ATPase-coupled transmembrane transporter activity"/>
    <property type="evidence" value="ECO:0000318"/>
    <property type="project" value="GO_Central"/>
</dbReference>
<dbReference type="GO" id="GO:0015562">
    <property type="term" value="F:efflux transmembrane transporter activity"/>
    <property type="evidence" value="ECO:0000314"/>
    <property type="project" value="FlyBase"/>
</dbReference>
<dbReference type="GO" id="GO:0060857">
    <property type="term" value="P:establishment of glial blood-brain barrier"/>
    <property type="evidence" value="ECO:0000314"/>
    <property type="project" value="FlyBase"/>
</dbReference>
<dbReference type="GO" id="GO:0097254">
    <property type="term" value="P:renal tubular secretion"/>
    <property type="evidence" value="ECO:0000270"/>
    <property type="project" value="FlyBase"/>
</dbReference>
<dbReference type="GO" id="GO:0017085">
    <property type="term" value="P:response to insecticide"/>
    <property type="evidence" value="ECO:0000315"/>
    <property type="project" value="FlyBase"/>
</dbReference>
<dbReference type="GO" id="GO:0009636">
    <property type="term" value="P:response to toxic substance"/>
    <property type="evidence" value="ECO:0000270"/>
    <property type="project" value="FlyBase"/>
</dbReference>
<dbReference type="GO" id="GO:0055085">
    <property type="term" value="P:transmembrane transport"/>
    <property type="evidence" value="ECO:0000318"/>
    <property type="project" value="GO_Central"/>
</dbReference>
<dbReference type="GO" id="GO:0042908">
    <property type="term" value="P:xenobiotic transport"/>
    <property type="evidence" value="ECO:0000314"/>
    <property type="project" value="FlyBase"/>
</dbReference>
<dbReference type="CDD" id="cd18577">
    <property type="entry name" value="ABC_6TM_Pgp_ABCB1_D1_like"/>
    <property type="match status" value="1"/>
</dbReference>
<dbReference type="CDD" id="cd18578">
    <property type="entry name" value="ABC_6TM_Pgp_ABCB1_D2_like"/>
    <property type="match status" value="1"/>
</dbReference>
<dbReference type="CDD" id="cd03249">
    <property type="entry name" value="ABC_MTABC3_MDL1_MDL2"/>
    <property type="match status" value="2"/>
</dbReference>
<dbReference type="FunFam" id="3.40.50.300:FF:000479">
    <property type="entry name" value="Multidrug resistance protein 1A"/>
    <property type="match status" value="1"/>
</dbReference>
<dbReference type="FunFam" id="1.20.1560.10:FF:000153">
    <property type="entry name" value="multidrug resistance protein homolog 65"/>
    <property type="match status" value="1"/>
</dbReference>
<dbReference type="FunFam" id="3.40.50.300:FF:001370">
    <property type="entry name" value="p-GlycoProtein related"/>
    <property type="match status" value="1"/>
</dbReference>
<dbReference type="Gene3D" id="1.20.1560.10">
    <property type="entry name" value="ABC transporter type 1, transmembrane domain"/>
    <property type="match status" value="1"/>
</dbReference>
<dbReference type="Gene3D" id="3.40.50.300">
    <property type="entry name" value="P-loop containing nucleotide triphosphate hydrolases"/>
    <property type="match status" value="2"/>
</dbReference>
<dbReference type="InterPro" id="IPR003593">
    <property type="entry name" value="AAA+_ATPase"/>
</dbReference>
<dbReference type="InterPro" id="IPR011527">
    <property type="entry name" value="ABC1_TM_dom"/>
</dbReference>
<dbReference type="InterPro" id="IPR036640">
    <property type="entry name" value="ABC1_TM_sf"/>
</dbReference>
<dbReference type="InterPro" id="IPR003439">
    <property type="entry name" value="ABC_transporter-like_ATP-bd"/>
</dbReference>
<dbReference type="InterPro" id="IPR017871">
    <property type="entry name" value="ABC_transporter-like_CS"/>
</dbReference>
<dbReference type="InterPro" id="IPR027417">
    <property type="entry name" value="P-loop_NTPase"/>
</dbReference>
<dbReference type="InterPro" id="IPR039421">
    <property type="entry name" value="Type_1_exporter"/>
</dbReference>
<dbReference type="PANTHER" id="PTHR43394">
    <property type="entry name" value="ATP-DEPENDENT PERMEASE MDL1, MITOCHONDRIAL"/>
    <property type="match status" value="1"/>
</dbReference>
<dbReference type="PANTHER" id="PTHR43394:SF27">
    <property type="entry name" value="ATP-DEPENDENT TRANSLOCASE ABCB1-LIKE"/>
    <property type="match status" value="1"/>
</dbReference>
<dbReference type="Pfam" id="PF00664">
    <property type="entry name" value="ABC_membrane"/>
    <property type="match status" value="2"/>
</dbReference>
<dbReference type="Pfam" id="PF00005">
    <property type="entry name" value="ABC_tran"/>
    <property type="match status" value="2"/>
</dbReference>
<dbReference type="SMART" id="SM00382">
    <property type="entry name" value="AAA"/>
    <property type="match status" value="2"/>
</dbReference>
<dbReference type="SUPFAM" id="SSF90123">
    <property type="entry name" value="ABC transporter transmembrane region"/>
    <property type="match status" value="2"/>
</dbReference>
<dbReference type="SUPFAM" id="SSF52540">
    <property type="entry name" value="P-loop containing nucleoside triphosphate hydrolases"/>
    <property type="match status" value="2"/>
</dbReference>
<dbReference type="PROSITE" id="PS50929">
    <property type="entry name" value="ABC_TM1F"/>
    <property type="match status" value="2"/>
</dbReference>
<dbReference type="PROSITE" id="PS00211">
    <property type="entry name" value="ABC_TRANSPORTER_1"/>
    <property type="match status" value="2"/>
</dbReference>
<dbReference type="PROSITE" id="PS50893">
    <property type="entry name" value="ABC_TRANSPORTER_2"/>
    <property type="match status" value="2"/>
</dbReference>
<reference key="1">
    <citation type="journal article" date="1991" name="Mol. Cell. Biol.">
        <title>Isolation and characterization of Drosophila multidrug resistance gene homologs.</title>
        <authorList>
            <person name="Wu C.-T."/>
            <person name="Budding M."/>
            <person name="Griffin M.S."/>
            <person name="Croop J.M."/>
        </authorList>
    </citation>
    <scope>NUCLEOTIDE SEQUENCE [MRNA]</scope>
    <source>
        <tissue>Head</tissue>
    </source>
</reference>
<reference key="2">
    <citation type="journal article" date="2000" name="Heredity">
        <title>Genetics of alpha-amanitin resistance in a natural population of Drosophila melanogaster.</title>
        <authorList>
            <person name="Begun D.J."/>
            <person name="Whitley P."/>
        </authorList>
    </citation>
    <scope>NUCLEOTIDE SEQUENCE [GENOMIC DNA]</scope>
    <source>
        <strain>WSIII25</strain>
        <strain>WSIII27</strain>
    </source>
</reference>
<reference key="3">
    <citation type="journal article" date="2000" name="Science">
        <title>The genome sequence of Drosophila melanogaster.</title>
        <authorList>
            <person name="Adams M.D."/>
            <person name="Celniker S.E."/>
            <person name="Holt R.A."/>
            <person name="Evans C.A."/>
            <person name="Gocayne J.D."/>
            <person name="Amanatides P.G."/>
            <person name="Scherer S.E."/>
            <person name="Li P.W."/>
            <person name="Hoskins R.A."/>
            <person name="Galle R.F."/>
            <person name="George R.A."/>
            <person name="Lewis S.E."/>
            <person name="Richards S."/>
            <person name="Ashburner M."/>
            <person name="Henderson S.N."/>
            <person name="Sutton G.G."/>
            <person name="Wortman J.R."/>
            <person name="Yandell M.D."/>
            <person name="Zhang Q."/>
            <person name="Chen L.X."/>
            <person name="Brandon R.C."/>
            <person name="Rogers Y.-H.C."/>
            <person name="Blazej R.G."/>
            <person name="Champe M."/>
            <person name="Pfeiffer B.D."/>
            <person name="Wan K.H."/>
            <person name="Doyle C."/>
            <person name="Baxter E.G."/>
            <person name="Helt G."/>
            <person name="Nelson C.R."/>
            <person name="Miklos G.L.G."/>
            <person name="Abril J.F."/>
            <person name="Agbayani A."/>
            <person name="An H.-J."/>
            <person name="Andrews-Pfannkoch C."/>
            <person name="Baldwin D."/>
            <person name="Ballew R.M."/>
            <person name="Basu A."/>
            <person name="Baxendale J."/>
            <person name="Bayraktaroglu L."/>
            <person name="Beasley E.M."/>
            <person name="Beeson K.Y."/>
            <person name="Benos P.V."/>
            <person name="Berman B.P."/>
            <person name="Bhandari D."/>
            <person name="Bolshakov S."/>
            <person name="Borkova D."/>
            <person name="Botchan M.R."/>
            <person name="Bouck J."/>
            <person name="Brokstein P."/>
            <person name="Brottier P."/>
            <person name="Burtis K.C."/>
            <person name="Busam D.A."/>
            <person name="Butler H."/>
            <person name="Cadieu E."/>
            <person name="Center A."/>
            <person name="Chandra I."/>
            <person name="Cherry J.M."/>
            <person name="Cawley S."/>
            <person name="Dahlke C."/>
            <person name="Davenport L.B."/>
            <person name="Davies P."/>
            <person name="de Pablos B."/>
            <person name="Delcher A."/>
            <person name="Deng Z."/>
            <person name="Mays A.D."/>
            <person name="Dew I."/>
            <person name="Dietz S.M."/>
            <person name="Dodson K."/>
            <person name="Doup L.E."/>
            <person name="Downes M."/>
            <person name="Dugan-Rocha S."/>
            <person name="Dunkov B.C."/>
            <person name="Dunn P."/>
            <person name="Durbin K.J."/>
            <person name="Evangelista C.C."/>
            <person name="Ferraz C."/>
            <person name="Ferriera S."/>
            <person name="Fleischmann W."/>
            <person name="Fosler C."/>
            <person name="Gabrielian A.E."/>
            <person name="Garg N.S."/>
            <person name="Gelbart W.M."/>
            <person name="Glasser K."/>
            <person name="Glodek A."/>
            <person name="Gong F."/>
            <person name="Gorrell J.H."/>
            <person name="Gu Z."/>
            <person name="Guan P."/>
            <person name="Harris M."/>
            <person name="Harris N.L."/>
            <person name="Harvey D.A."/>
            <person name="Heiman T.J."/>
            <person name="Hernandez J.R."/>
            <person name="Houck J."/>
            <person name="Hostin D."/>
            <person name="Houston K.A."/>
            <person name="Howland T.J."/>
            <person name="Wei M.-H."/>
            <person name="Ibegwam C."/>
            <person name="Jalali M."/>
            <person name="Kalush F."/>
            <person name="Karpen G.H."/>
            <person name="Ke Z."/>
            <person name="Kennison J.A."/>
            <person name="Ketchum K.A."/>
            <person name="Kimmel B.E."/>
            <person name="Kodira C.D."/>
            <person name="Kraft C.L."/>
            <person name="Kravitz S."/>
            <person name="Kulp D."/>
            <person name="Lai Z."/>
            <person name="Lasko P."/>
            <person name="Lei Y."/>
            <person name="Levitsky A.A."/>
            <person name="Li J.H."/>
            <person name="Li Z."/>
            <person name="Liang Y."/>
            <person name="Lin X."/>
            <person name="Liu X."/>
            <person name="Mattei B."/>
            <person name="McIntosh T.C."/>
            <person name="McLeod M.P."/>
            <person name="McPherson D."/>
            <person name="Merkulov G."/>
            <person name="Milshina N.V."/>
            <person name="Mobarry C."/>
            <person name="Morris J."/>
            <person name="Moshrefi A."/>
            <person name="Mount S.M."/>
            <person name="Moy M."/>
            <person name="Murphy B."/>
            <person name="Murphy L."/>
            <person name="Muzny D.M."/>
            <person name="Nelson D.L."/>
            <person name="Nelson D.R."/>
            <person name="Nelson K.A."/>
            <person name="Nixon K."/>
            <person name="Nusskern D.R."/>
            <person name="Pacleb J.M."/>
            <person name="Palazzolo M."/>
            <person name="Pittman G.S."/>
            <person name="Pan S."/>
            <person name="Pollard J."/>
            <person name="Puri V."/>
            <person name="Reese M.G."/>
            <person name="Reinert K."/>
            <person name="Remington K."/>
            <person name="Saunders R.D.C."/>
            <person name="Scheeler F."/>
            <person name="Shen H."/>
            <person name="Shue B.C."/>
            <person name="Siden-Kiamos I."/>
            <person name="Simpson M."/>
            <person name="Skupski M.P."/>
            <person name="Smith T.J."/>
            <person name="Spier E."/>
            <person name="Spradling A.C."/>
            <person name="Stapleton M."/>
            <person name="Strong R."/>
            <person name="Sun E."/>
            <person name="Svirskas R."/>
            <person name="Tector C."/>
            <person name="Turner R."/>
            <person name="Venter E."/>
            <person name="Wang A.H."/>
            <person name="Wang X."/>
            <person name="Wang Z.-Y."/>
            <person name="Wassarman D.A."/>
            <person name="Weinstock G.M."/>
            <person name="Weissenbach J."/>
            <person name="Williams S.M."/>
            <person name="Woodage T."/>
            <person name="Worley K.C."/>
            <person name="Wu D."/>
            <person name="Yang S."/>
            <person name="Yao Q.A."/>
            <person name="Ye J."/>
            <person name="Yeh R.-F."/>
            <person name="Zaveri J.S."/>
            <person name="Zhan M."/>
            <person name="Zhang G."/>
            <person name="Zhao Q."/>
            <person name="Zheng L."/>
            <person name="Zheng X.H."/>
            <person name="Zhong F.N."/>
            <person name="Zhong W."/>
            <person name="Zhou X."/>
            <person name="Zhu S.C."/>
            <person name="Zhu X."/>
            <person name="Smith H.O."/>
            <person name="Gibbs R.A."/>
            <person name="Myers E.W."/>
            <person name="Rubin G.M."/>
            <person name="Venter J.C."/>
        </authorList>
    </citation>
    <scope>NUCLEOTIDE SEQUENCE [LARGE SCALE GENOMIC DNA]</scope>
    <source>
        <strain>Berkeley</strain>
    </source>
</reference>
<reference key="4">
    <citation type="journal article" date="2002" name="Genome Biol.">
        <title>Annotation of the Drosophila melanogaster euchromatic genome: a systematic review.</title>
        <authorList>
            <person name="Misra S."/>
            <person name="Crosby M.A."/>
            <person name="Mungall C.J."/>
            <person name="Matthews B.B."/>
            <person name="Campbell K.S."/>
            <person name="Hradecky P."/>
            <person name="Huang Y."/>
            <person name="Kaminker J.S."/>
            <person name="Millburn G.H."/>
            <person name="Prochnik S.E."/>
            <person name="Smith C.D."/>
            <person name="Tupy J.L."/>
            <person name="Whitfield E.J."/>
            <person name="Bayraktaroglu L."/>
            <person name="Berman B.P."/>
            <person name="Bettencourt B.R."/>
            <person name="Celniker S.E."/>
            <person name="de Grey A.D.N.J."/>
            <person name="Drysdale R.A."/>
            <person name="Harris N.L."/>
            <person name="Richter J."/>
            <person name="Russo S."/>
            <person name="Schroeder A.J."/>
            <person name="Shu S.Q."/>
            <person name="Stapleton M."/>
            <person name="Yamada C."/>
            <person name="Ashburner M."/>
            <person name="Gelbart W.M."/>
            <person name="Rubin G.M."/>
            <person name="Lewis S.E."/>
        </authorList>
    </citation>
    <scope>GENOME REANNOTATION</scope>
    <source>
        <strain>Berkeley</strain>
    </source>
</reference>
<reference key="5">
    <citation type="journal article" date="2007" name="Glycobiology">
        <title>Identification of N-glycosylated proteins from the central nervous system of Drosophila melanogaster.</title>
        <authorList>
            <person name="Koles K."/>
            <person name="Lim J.-M."/>
            <person name="Aoki K."/>
            <person name="Porterfield M."/>
            <person name="Tiemeyer M."/>
            <person name="Wells L."/>
            <person name="Panin V."/>
        </authorList>
    </citation>
    <scope>GLYCOSYLATION [LARGE SCALE ANALYSIS] AT ASN-103</scope>
    <scope>IDENTIFICATION BY MASS SPECTROMETRY</scope>
    <source>
        <strain>Oregon-R</strain>
        <tissue>Head</tissue>
    </source>
</reference>
<gene>
    <name type="primary">Mdr65</name>
    <name type="ORF">CG10181</name>
</gene>
<proteinExistence type="evidence at protein level"/>
<protein>
    <recommendedName>
        <fullName>Multidrug resistance protein homolog 65</fullName>
        <ecNumber>7.6.2.2</ecNumber>
    </recommendedName>
    <alternativeName>
        <fullName>P-glycoprotein 65</fullName>
    </alternativeName>
</protein>